<evidence type="ECO:0000305" key="1"/>
<evidence type="ECO:0000312" key="2">
    <source>
        <dbReference type="SGD" id="S000004679"/>
    </source>
</evidence>
<sequence length="121" mass="14033">MYVRRFYSDWFSGFSMFKNFNSSSFGLDSIIFFKYNRCFISSLEKSLNCIESSSFGTTTLVSSFKSHNFLKLLLLEADLLLLLLSLLLTWKYIKEAMSLTILSSLLPFWDPFDTNLSIKLS</sequence>
<protein>
    <recommendedName>
        <fullName evidence="1">Uncharacterized protein YMR075C-A</fullName>
    </recommendedName>
</protein>
<accession>Q6B0Y7</accession>
<accession>A0A8D9PCP6</accession>
<name>YM075_YEAST</name>
<organism>
    <name type="scientific">Saccharomyces cerevisiae (strain ATCC 204508 / S288c)</name>
    <name type="common">Baker's yeast</name>
    <dbReference type="NCBI Taxonomy" id="559292"/>
    <lineage>
        <taxon>Eukaryota</taxon>
        <taxon>Fungi</taxon>
        <taxon>Dikarya</taxon>
        <taxon>Ascomycota</taxon>
        <taxon>Saccharomycotina</taxon>
        <taxon>Saccharomycetes</taxon>
        <taxon>Saccharomycetales</taxon>
        <taxon>Saccharomycetaceae</taxon>
        <taxon>Saccharomyces</taxon>
    </lineage>
</organism>
<reference key="1">
    <citation type="journal article" date="1997" name="Nature">
        <title>The nucleotide sequence of Saccharomyces cerevisiae chromosome XIII.</title>
        <authorList>
            <person name="Bowman S."/>
            <person name="Churcher C.M."/>
            <person name="Badcock K."/>
            <person name="Brown D."/>
            <person name="Chillingworth T."/>
            <person name="Connor R."/>
            <person name="Dedman K."/>
            <person name="Devlin K."/>
            <person name="Gentles S."/>
            <person name="Hamlin N."/>
            <person name="Hunt S."/>
            <person name="Jagels K."/>
            <person name="Lye G."/>
            <person name="Moule S."/>
            <person name="Odell C."/>
            <person name="Pearson D."/>
            <person name="Rajandream M.A."/>
            <person name="Rice P."/>
            <person name="Skelton J."/>
            <person name="Walsh S.V."/>
            <person name="Whitehead S."/>
            <person name="Barrell B.G."/>
        </authorList>
    </citation>
    <scope>NUCLEOTIDE SEQUENCE [LARGE SCALE GENOMIC DNA]</scope>
    <source>
        <strain>ATCC 204508 / S288c</strain>
    </source>
</reference>
<reference key="2">
    <citation type="journal article" date="2014" name="G3 (Bethesda)">
        <title>The reference genome sequence of Saccharomyces cerevisiae: Then and now.</title>
        <authorList>
            <person name="Engel S.R."/>
            <person name="Dietrich F.S."/>
            <person name="Fisk D.G."/>
            <person name="Binkley G."/>
            <person name="Balakrishnan R."/>
            <person name="Costanzo M.C."/>
            <person name="Dwight S.S."/>
            <person name="Hitz B.C."/>
            <person name="Karra K."/>
            <person name="Nash R.S."/>
            <person name="Weng S."/>
            <person name="Wong E.D."/>
            <person name="Lloyd P."/>
            <person name="Skrzypek M.S."/>
            <person name="Miyasato S.R."/>
            <person name="Simison M."/>
            <person name="Cherry J.M."/>
        </authorList>
    </citation>
    <scope>GENOME REANNOTATION</scope>
    <source>
        <strain>ATCC 204508 / S288c</strain>
    </source>
</reference>
<reference key="3">
    <citation type="journal article" date="2007" name="Genome Res.">
        <title>Approaching a complete repository of sequence-verified protein-encoding clones for Saccharomyces cerevisiae.</title>
        <authorList>
            <person name="Hu Y."/>
            <person name="Rolfs A."/>
            <person name="Bhullar B."/>
            <person name="Murthy T.V.S."/>
            <person name="Zhu C."/>
            <person name="Berger M.F."/>
            <person name="Camargo A.A."/>
            <person name="Kelley F."/>
            <person name="McCarron S."/>
            <person name="Jepson D."/>
            <person name="Richardson A."/>
            <person name="Raphael J."/>
            <person name="Moreira D."/>
            <person name="Taycher E."/>
            <person name="Zuo D."/>
            <person name="Mohr S."/>
            <person name="Kane M.F."/>
            <person name="Williamson J."/>
            <person name="Simpson A.J.G."/>
            <person name="Bulyk M.L."/>
            <person name="Harlow E."/>
            <person name="Marsischky G."/>
            <person name="Kolodner R.D."/>
            <person name="LaBaer J."/>
        </authorList>
    </citation>
    <scope>NUCLEOTIDE SEQUENCE [GENOMIC DNA]</scope>
    <source>
        <strain>ATCC 204508 / S288c</strain>
    </source>
</reference>
<reference key="4">
    <citation type="journal article" date="2015" name="J. Proteomics">
        <title>Integrated RNA- and protein profiling of fermentation and respiration in diploid budding yeast provides insight into nutrient control of cell growth and development.</title>
        <authorList>
            <person name="Becker E."/>
            <person name="Liu Y."/>
            <person name="Lardenois A."/>
            <person name="Walther T."/>
            <person name="Horecka J."/>
            <person name="Stuparevic I."/>
            <person name="Law M.J."/>
            <person name="Lavigne R."/>
            <person name="Evrard B."/>
            <person name="Demougin P."/>
            <person name="Riffle M."/>
            <person name="Strich R."/>
            <person name="Davis R.W."/>
            <person name="Pineau C."/>
            <person name="Primig M."/>
        </authorList>
    </citation>
    <scope>IDENTIFICATION BY MASS SPECTROMETRY</scope>
</reference>
<feature type="chain" id="PRO_0000299668" description="Uncharacterized protein YMR075C-A">
    <location>
        <begin position="1"/>
        <end position="121"/>
    </location>
</feature>
<dbReference type="EMBL" id="Z48952">
    <property type="status" value="NOT_ANNOTATED_CDS"/>
    <property type="molecule type" value="Genomic_DNA"/>
</dbReference>
<dbReference type="EMBL" id="BK006946">
    <property type="protein sequence ID" value="DAD54811.1"/>
    <property type="molecule type" value="Genomic_DNA"/>
</dbReference>
<dbReference type="EMBL" id="AY693293">
    <property type="protein sequence ID" value="AAT93312.1"/>
    <property type="molecule type" value="Genomic_DNA"/>
</dbReference>
<dbReference type="RefSeq" id="NP_001381970.1">
    <property type="nucleotide sequence ID" value="NM_001395040.1"/>
</dbReference>
<dbReference type="SMR" id="Q6B0Y7"/>
<dbReference type="DIP" id="DIP-28097N"/>
<dbReference type="FunCoup" id="Q6B0Y7">
    <property type="interactions" value="12"/>
</dbReference>
<dbReference type="IntAct" id="Q6B0Y7">
    <property type="interactions" value="1"/>
</dbReference>
<dbReference type="MINT" id="Q6B0Y7"/>
<dbReference type="STRING" id="4932.YMR075C-A"/>
<dbReference type="PaxDb" id="4932-YMR075C-A"/>
<dbReference type="EnsemblFungi" id="YMR075C-A_mRNA">
    <property type="protein sequence ID" value="YMR075C-A"/>
    <property type="gene ID" value="YMR075C-A"/>
</dbReference>
<dbReference type="GeneID" id="855098"/>
<dbReference type="AGR" id="SGD:S000004679"/>
<dbReference type="SGD" id="S000004679">
    <property type="gene designation" value="YMR075C-A"/>
</dbReference>
<dbReference type="HOGENOM" id="CLU_2039396_0_0_1"/>
<dbReference type="PRO" id="PR:Q6B0Y7"/>
<dbReference type="Proteomes" id="UP000002311">
    <property type="component" value="Chromosome XIII"/>
</dbReference>
<comment type="miscellaneous">
    <text evidence="1">Almost completely overlaps RCO1.</text>
</comment>
<gene>
    <name evidence="2" type="ordered locus">YMR075C-A</name>
</gene>
<keyword id="KW-1185">Reference proteome</keyword>
<proteinExistence type="evidence at protein level"/>